<sequence>MIVKICGLKKAVDVAAAVDNGADMIGFVFAKSKRQVTVEKAHELAKNIPANVKKVGVFVNPTEEELKAAIKGVPLDIVQLHGQEPAKQANRTDAEVIKAFPVKDGKLPTNINDYPNAYILLDAPAEEYEGGSGKTFDWDKINRDMLTKNKLIIAGGLNAQNVQEAIKRFEPYAVDISSGVETNGEKDPEKIKCFIKTAKGVE</sequence>
<protein>
    <recommendedName>
        <fullName evidence="1">N-(5'-phosphoribosyl)anthranilate isomerase</fullName>
        <shortName evidence="1">PRAI</shortName>
        <ecNumber evidence="1">5.3.1.24</ecNumber>
    </recommendedName>
</protein>
<name>TRPF_LISMC</name>
<feature type="chain" id="PRO_1000203209" description="N-(5'-phosphoribosyl)anthranilate isomerase">
    <location>
        <begin position="1"/>
        <end position="202"/>
    </location>
</feature>
<proteinExistence type="inferred from homology"/>
<keyword id="KW-0028">Amino-acid biosynthesis</keyword>
<keyword id="KW-0057">Aromatic amino acid biosynthesis</keyword>
<keyword id="KW-0413">Isomerase</keyword>
<keyword id="KW-0822">Tryptophan biosynthesis</keyword>
<comment type="catalytic activity">
    <reaction evidence="1">
        <text>N-(5-phospho-beta-D-ribosyl)anthranilate = 1-(2-carboxyphenylamino)-1-deoxy-D-ribulose 5-phosphate</text>
        <dbReference type="Rhea" id="RHEA:21540"/>
        <dbReference type="ChEBI" id="CHEBI:18277"/>
        <dbReference type="ChEBI" id="CHEBI:58613"/>
        <dbReference type="EC" id="5.3.1.24"/>
    </reaction>
</comment>
<comment type="pathway">
    <text evidence="1">Amino-acid biosynthesis; L-tryptophan biosynthesis; L-tryptophan from chorismate: step 3/5.</text>
</comment>
<comment type="similarity">
    <text evidence="1">Belongs to the TrpF family.</text>
</comment>
<organism>
    <name type="scientific">Listeria monocytogenes serotype 4b (strain CLIP80459)</name>
    <dbReference type="NCBI Taxonomy" id="568819"/>
    <lineage>
        <taxon>Bacteria</taxon>
        <taxon>Bacillati</taxon>
        <taxon>Bacillota</taxon>
        <taxon>Bacilli</taxon>
        <taxon>Bacillales</taxon>
        <taxon>Listeriaceae</taxon>
        <taxon>Listeria</taxon>
    </lineage>
</organism>
<gene>
    <name evidence="1" type="primary">trpF</name>
    <name type="ordered locus">Lm4b_01640</name>
</gene>
<reference key="1">
    <citation type="journal article" date="2012" name="BMC Genomics">
        <title>Comparative genomics and transcriptomics of lineages I, II, and III strains of Listeria monocytogenes.</title>
        <authorList>
            <person name="Hain T."/>
            <person name="Ghai R."/>
            <person name="Billion A."/>
            <person name="Kuenne C.T."/>
            <person name="Steinweg C."/>
            <person name="Izar B."/>
            <person name="Mohamed W."/>
            <person name="Mraheil M."/>
            <person name="Domann E."/>
            <person name="Schaffrath S."/>
            <person name="Karst U."/>
            <person name="Goesmann A."/>
            <person name="Oehm S."/>
            <person name="Puhler A."/>
            <person name="Merkl R."/>
            <person name="Vorwerk S."/>
            <person name="Glaser P."/>
            <person name="Garrido P."/>
            <person name="Rusniok C."/>
            <person name="Buchrieser C."/>
            <person name="Goebel W."/>
            <person name="Chakraborty T."/>
        </authorList>
    </citation>
    <scope>NUCLEOTIDE SEQUENCE [LARGE SCALE GENOMIC DNA]</scope>
    <source>
        <strain>CLIP80459</strain>
    </source>
</reference>
<accession>C1KVS6</accession>
<evidence type="ECO:0000255" key="1">
    <source>
        <dbReference type="HAMAP-Rule" id="MF_00135"/>
    </source>
</evidence>
<dbReference type="EC" id="5.3.1.24" evidence="1"/>
<dbReference type="EMBL" id="FM242711">
    <property type="protein sequence ID" value="CAS05401.1"/>
    <property type="molecule type" value="Genomic_DNA"/>
</dbReference>
<dbReference type="RefSeq" id="WP_003727350.1">
    <property type="nucleotide sequence ID" value="NC_012488.1"/>
</dbReference>
<dbReference type="SMR" id="C1KVS6"/>
<dbReference type="KEGG" id="lmc:Lm4b_01640"/>
<dbReference type="HOGENOM" id="CLU_076364_1_0_9"/>
<dbReference type="UniPathway" id="UPA00035">
    <property type="reaction ID" value="UER00042"/>
</dbReference>
<dbReference type="GO" id="GO:0004640">
    <property type="term" value="F:phosphoribosylanthranilate isomerase activity"/>
    <property type="evidence" value="ECO:0007669"/>
    <property type="project" value="UniProtKB-UniRule"/>
</dbReference>
<dbReference type="GO" id="GO:0000162">
    <property type="term" value="P:L-tryptophan biosynthetic process"/>
    <property type="evidence" value="ECO:0007669"/>
    <property type="project" value="UniProtKB-UniRule"/>
</dbReference>
<dbReference type="CDD" id="cd00405">
    <property type="entry name" value="PRAI"/>
    <property type="match status" value="1"/>
</dbReference>
<dbReference type="FunFam" id="3.20.20.70:FF:000075">
    <property type="entry name" value="Tryptophan biosynthesis protein TRP1"/>
    <property type="match status" value="1"/>
</dbReference>
<dbReference type="Gene3D" id="3.20.20.70">
    <property type="entry name" value="Aldolase class I"/>
    <property type="match status" value="1"/>
</dbReference>
<dbReference type="HAMAP" id="MF_00135">
    <property type="entry name" value="PRAI"/>
    <property type="match status" value="1"/>
</dbReference>
<dbReference type="InterPro" id="IPR013785">
    <property type="entry name" value="Aldolase_TIM"/>
</dbReference>
<dbReference type="InterPro" id="IPR001240">
    <property type="entry name" value="PRAI_dom"/>
</dbReference>
<dbReference type="InterPro" id="IPR011060">
    <property type="entry name" value="RibuloseP-bd_barrel"/>
</dbReference>
<dbReference type="InterPro" id="IPR044643">
    <property type="entry name" value="TrpF_fam"/>
</dbReference>
<dbReference type="NCBIfam" id="NF002300">
    <property type="entry name" value="PRK01222.1-7"/>
    <property type="match status" value="1"/>
</dbReference>
<dbReference type="PANTHER" id="PTHR42894">
    <property type="entry name" value="N-(5'-PHOSPHORIBOSYL)ANTHRANILATE ISOMERASE"/>
    <property type="match status" value="1"/>
</dbReference>
<dbReference type="PANTHER" id="PTHR42894:SF1">
    <property type="entry name" value="N-(5'-PHOSPHORIBOSYL)ANTHRANILATE ISOMERASE"/>
    <property type="match status" value="1"/>
</dbReference>
<dbReference type="Pfam" id="PF00697">
    <property type="entry name" value="PRAI"/>
    <property type="match status" value="1"/>
</dbReference>
<dbReference type="SUPFAM" id="SSF51366">
    <property type="entry name" value="Ribulose-phoshate binding barrel"/>
    <property type="match status" value="1"/>
</dbReference>